<dbReference type="EC" id="2.7.7.101" evidence="1"/>
<dbReference type="EMBL" id="AE000657">
    <property type="protein sequence ID" value="AAC07430.1"/>
    <property type="molecule type" value="Genomic_DNA"/>
</dbReference>
<dbReference type="PIR" id="G70429">
    <property type="entry name" value="G70429"/>
</dbReference>
<dbReference type="RefSeq" id="NP_214030.1">
    <property type="nucleotide sequence ID" value="NC_000918.1"/>
</dbReference>
<dbReference type="RefSeq" id="WP_010880968.1">
    <property type="nucleotide sequence ID" value="NC_000918.1"/>
</dbReference>
<dbReference type="PDB" id="2AU3">
    <property type="method" value="X-ray"/>
    <property type="resolution" value="2.00 A"/>
    <property type="chains" value="A=1-405"/>
</dbReference>
<dbReference type="PDBsum" id="2AU3"/>
<dbReference type="SMR" id="O67465"/>
<dbReference type="FunCoup" id="O67465">
    <property type="interactions" value="224"/>
</dbReference>
<dbReference type="STRING" id="224324.aq_1493"/>
<dbReference type="EnsemblBacteria" id="AAC07430">
    <property type="protein sequence ID" value="AAC07430"/>
    <property type="gene ID" value="aq_1493"/>
</dbReference>
<dbReference type="KEGG" id="aae:aq_1493"/>
<dbReference type="PATRIC" id="fig|224324.8.peg.1163"/>
<dbReference type="eggNOG" id="COG0358">
    <property type="taxonomic scope" value="Bacteria"/>
</dbReference>
<dbReference type="HOGENOM" id="CLU_013501_3_2_0"/>
<dbReference type="InParanoid" id="O67465"/>
<dbReference type="OrthoDB" id="9803773at2"/>
<dbReference type="EvolutionaryTrace" id="O67465"/>
<dbReference type="Proteomes" id="UP000000798">
    <property type="component" value="Chromosome"/>
</dbReference>
<dbReference type="GO" id="GO:0005737">
    <property type="term" value="C:cytoplasm"/>
    <property type="evidence" value="ECO:0000318"/>
    <property type="project" value="GO_Central"/>
</dbReference>
<dbReference type="GO" id="GO:0000428">
    <property type="term" value="C:DNA-directed RNA polymerase complex"/>
    <property type="evidence" value="ECO:0007669"/>
    <property type="project" value="UniProtKB-KW"/>
</dbReference>
<dbReference type="GO" id="GO:1990077">
    <property type="term" value="C:primosome complex"/>
    <property type="evidence" value="ECO:0007669"/>
    <property type="project" value="UniProtKB-KW"/>
</dbReference>
<dbReference type="GO" id="GO:0003677">
    <property type="term" value="F:DNA binding"/>
    <property type="evidence" value="ECO:0007669"/>
    <property type="project" value="UniProtKB-KW"/>
</dbReference>
<dbReference type="GO" id="GO:0003899">
    <property type="term" value="F:DNA-directed RNA polymerase activity"/>
    <property type="evidence" value="ECO:0007669"/>
    <property type="project" value="InterPro"/>
</dbReference>
<dbReference type="GO" id="GO:0008270">
    <property type="term" value="F:zinc ion binding"/>
    <property type="evidence" value="ECO:0007669"/>
    <property type="project" value="UniProtKB-UniRule"/>
</dbReference>
<dbReference type="GO" id="GO:0006269">
    <property type="term" value="P:DNA replication, synthesis of primer"/>
    <property type="evidence" value="ECO:0000318"/>
    <property type="project" value="GO_Central"/>
</dbReference>
<dbReference type="CDD" id="cd03364">
    <property type="entry name" value="TOPRIM_DnaG_primases"/>
    <property type="match status" value="1"/>
</dbReference>
<dbReference type="FunFam" id="3.90.580.10:FF:000001">
    <property type="entry name" value="DNA primase"/>
    <property type="match status" value="1"/>
</dbReference>
<dbReference type="Gene3D" id="1.20.50.30">
    <property type="match status" value="1"/>
</dbReference>
<dbReference type="Gene3D" id="3.40.1360.10">
    <property type="match status" value="1"/>
</dbReference>
<dbReference type="Gene3D" id="3.90.980.10">
    <property type="entry name" value="DNA primase, catalytic core, N-terminal domain"/>
    <property type="match status" value="1"/>
</dbReference>
<dbReference type="Gene3D" id="3.90.580.10">
    <property type="entry name" value="Zinc finger, CHC2-type domain"/>
    <property type="match status" value="1"/>
</dbReference>
<dbReference type="HAMAP" id="MF_00974">
    <property type="entry name" value="DNA_primase_DnaG"/>
    <property type="match status" value="1"/>
</dbReference>
<dbReference type="InterPro" id="IPR037068">
    <property type="entry name" value="DNA_primase_core_N_sf"/>
</dbReference>
<dbReference type="InterPro" id="IPR006295">
    <property type="entry name" value="DNA_primase_DnaG"/>
</dbReference>
<dbReference type="InterPro" id="IPR036977">
    <property type="entry name" value="DNA_primase_Znf_CHC2"/>
</dbReference>
<dbReference type="InterPro" id="IPR030846">
    <property type="entry name" value="DnaG_bac"/>
</dbReference>
<dbReference type="InterPro" id="IPR013264">
    <property type="entry name" value="DNAG_N"/>
</dbReference>
<dbReference type="InterPro" id="IPR050219">
    <property type="entry name" value="DnaG_primase"/>
</dbReference>
<dbReference type="InterPro" id="IPR034151">
    <property type="entry name" value="TOPRIM_DnaG_bac"/>
</dbReference>
<dbReference type="InterPro" id="IPR006171">
    <property type="entry name" value="TOPRIM_dom"/>
</dbReference>
<dbReference type="InterPro" id="IPR002694">
    <property type="entry name" value="Znf_CHC2"/>
</dbReference>
<dbReference type="NCBIfam" id="TIGR01391">
    <property type="entry name" value="dnaG"/>
    <property type="match status" value="1"/>
</dbReference>
<dbReference type="PANTHER" id="PTHR30313">
    <property type="entry name" value="DNA PRIMASE"/>
    <property type="match status" value="1"/>
</dbReference>
<dbReference type="PANTHER" id="PTHR30313:SF2">
    <property type="entry name" value="DNA PRIMASE"/>
    <property type="match status" value="1"/>
</dbReference>
<dbReference type="Pfam" id="PF22410">
    <property type="entry name" value="DnaG_helical"/>
    <property type="match status" value="1"/>
</dbReference>
<dbReference type="Pfam" id="PF08275">
    <property type="entry name" value="DNAG_N"/>
    <property type="match status" value="1"/>
</dbReference>
<dbReference type="Pfam" id="PF13155">
    <property type="entry name" value="Toprim_2"/>
    <property type="match status" value="1"/>
</dbReference>
<dbReference type="Pfam" id="PF01807">
    <property type="entry name" value="Zn_ribbon_DnaG"/>
    <property type="match status" value="1"/>
</dbReference>
<dbReference type="SMART" id="SM00493">
    <property type="entry name" value="TOPRIM"/>
    <property type="match status" value="1"/>
</dbReference>
<dbReference type="SMART" id="SM00400">
    <property type="entry name" value="ZnF_CHCC"/>
    <property type="match status" value="1"/>
</dbReference>
<dbReference type="SUPFAM" id="SSF56731">
    <property type="entry name" value="DNA primase core"/>
    <property type="match status" value="1"/>
</dbReference>
<dbReference type="SUPFAM" id="SSF57783">
    <property type="entry name" value="Zinc beta-ribbon"/>
    <property type="match status" value="1"/>
</dbReference>
<dbReference type="PROSITE" id="PS50880">
    <property type="entry name" value="TOPRIM"/>
    <property type="match status" value="1"/>
</dbReference>
<evidence type="ECO:0000255" key="1">
    <source>
        <dbReference type="HAMAP-Rule" id="MF_00974"/>
    </source>
</evidence>
<evidence type="ECO:0000269" key="2">
    <source>
    </source>
</evidence>
<evidence type="ECO:0007829" key="3">
    <source>
        <dbReference type="PDB" id="2AU3"/>
    </source>
</evidence>
<protein>
    <recommendedName>
        <fullName evidence="1">DNA primase</fullName>
        <ecNumber evidence="1">2.7.7.101</ecNumber>
    </recommendedName>
</protein>
<gene>
    <name evidence="1" type="primary">dnaG</name>
    <name type="ordered locus">aq_1493</name>
</gene>
<accession>O67465</accession>
<sequence>MSSDIDELRREIDIVDVISEYLNLEKVGSNYRTNCPFHPDDTPSFYVSPSKQIFKCFGCGVGGDAIKFVSLYEDISYFEAALELAKRYGKKLDLEKISKDEKVYVALDRVCDFYRESLLKNREASEYVKSRGIDPKVARKFDLGYAPSSEALVKVLKENDLLEAYLETKNLLSPTKGVYRDLFLRRVVIPIKDPRGRVIGFGGRRIVEDKSPKYINSPDSRVFKKGENLFGLYEAKEYIKEEGFAILVEGYFDLLRLFSEGIRNVVAPLGTALTQNQANLLSKFTKKVYILYDGDDAGRKAMKSAIPLLLSAGVEVYPVYLPEGYDPDEFIKEFGKEELRRLINSSGELFETLIKTARENLEEKTREFRYYLGFISDGVRRFALASEFHTKYKVPMEILLMKIEKNSQEKEIKLSFKEKIFLKGLIELKPKIDLEVLNLSPELKELAVNALNGEEHLLPKEVLEYQVDNLEKLFNNILRDLQKSGKKRKKRGLKNVNT</sequence>
<reference key="1">
    <citation type="journal article" date="1998" name="Nature">
        <title>The complete genome of the hyperthermophilic bacterium Aquifex aeolicus.</title>
        <authorList>
            <person name="Deckert G."/>
            <person name="Warren P.V."/>
            <person name="Gaasterland T."/>
            <person name="Young W.G."/>
            <person name="Lenox A.L."/>
            <person name="Graham D.E."/>
            <person name="Overbeek R."/>
            <person name="Snead M.A."/>
            <person name="Keller M."/>
            <person name="Aujay M."/>
            <person name="Huber R."/>
            <person name="Feldman R.A."/>
            <person name="Short J.M."/>
            <person name="Olsen G.J."/>
            <person name="Swanson R.V."/>
        </authorList>
    </citation>
    <scope>NUCLEOTIDE SEQUENCE [LARGE SCALE GENOMIC DNA]</scope>
    <source>
        <strain>VF5</strain>
    </source>
</reference>
<reference key="2">
    <citation type="journal article" date="2005" name="Mol. Cell">
        <title>Crosstalk between primase subunits can act to regulate primer synthesis in trans.</title>
        <authorList>
            <person name="Corn J.E."/>
            <person name="Pease P.J."/>
            <person name="Hura G.L."/>
            <person name="Berger J.M."/>
        </authorList>
    </citation>
    <scope>X-RAY CRYSTALLOGRAPHY (2.00 ANGSTROMS) OF 1-405 IN COMPLEX WITH ZINC</scope>
    <scope>COFACTOR</scope>
</reference>
<comment type="function">
    <text evidence="1">RNA polymerase that catalyzes the synthesis of short RNA molecules used as primers for DNA polymerase during DNA replication.</text>
</comment>
<comment type="catalytic activity">
    <reaction evidence="1">
        <text>ssDNA + n NTP = ssDNA/pppN(pN)n-1 hybrid + (n-1) diphosphate.</text>
        <dbReference type="EC" id="2.7.7.101"/>
    </reaction>
</comment>
<comment type="cofactor">
    <cofactor evidence="1 2">
        <name>Zn(2+)</name>
        <dbReference type="ChEBI" id="CHEBI:29105"/>
    </cofactor>
    <text evidence="1 2">Binds 1 zinc ion per monomer.</text>
</comment>
<comment type="cofactor">
    <cofactor evidence="1">
        <name>Mg(2+)</name>
        <dbReference type="ChEBI" id="CHEBI:18420"/>
    </cofactor>
    <text evidence="1">Binds two Mg(2+) per subunit.</text>
</comment>
<comment type="subunit">
    <text evidence="1">Monomer. Interacts with DnaB.</text>
</comment>
<comment type="domain">
    <text evidence="1">Contains an N-terminal zinc-binding domain, a central core domain that contains the primase activity, and a C-terminal DnaB-binding domain.</text>
</comment>
<comment type="similarity">
    <text evidence="1">Belongs to the DnaG primase family.</text>
</comment>
<feature type="chain" id="PRO_0000180476" description="DNA primase">
    <location>
        <begin position="1"/>
        <end position="498"/>
    </location>
</feature>
<feature type="domain" description="Toprim" evidence="1">
    <location>
        <begin position="243"/>
        <end position="324"/>
    </location>
</feature>
<feature type="zinc finger region" description="CHC2-type" evidence="1">
    <location>
        <begin position="35"/>
        <end position="59"/>
    </location>
</feature>
<feature type="binding site" evidence="1">
    <location>
        <position position="249"/>
    </location>
    <ligand>
        <name>Mg(2+)</name>
        <dbReference type="ChEBI" id="CHEBI:18420"/>
        <label>1</label>
        <note>catalytic</note>
    </ligand>
</feature>
<feature type="binding site" evidence="1">
    <location>
        <position position="293"/>
    </location>
    <ligand>
        <name>Mg(2+)</name>
        <dbReference type="ChEBI" id="CHEBI:18420"/>
        <label>1</label>
        <note>catalytic</note>
    </ligand>
</feature>
<feature type="binding site" evidence="1">
    <location>
        <position position="293"/>
    </location>
    <ligand>
        <name>Mg(2+)</name>
        <dbReference type="ChEBI" id="CHEBI:18420"/>
        <label>2</label>
    </ligand>
</feature>
<feature type="binding site" evidence="1">
    <location>
        <position position="295"/>
    </location>
    <ligand>
        <name>Mg(2+)</name>
        <dbReference type="ChEBI" id="CHEBI:18420"/>
        <label>2</label>
    </ligand>
</feature>
<feature type="helix" evidence="3">
    <location>
        <begin position="4"/>
        <end position="11"/>
    </location>
</feature>
<feature type="helix" evidence="3">
    <location>
        <begin position="14"/>
        <end position="21"/>
    </location>
</feature>
<feature type="strand" evidence="3">
    <location>
        <begin position="25"/>
        <end position="27"/>
    </location>
</feature>
<feature type="strand" evidence="3">
    <location>
        <begin position="30"/>
        <end position="33"/>
    </location>
</feature>
<feature type="strand" evidence="3">
    <location>
        <begin position="36"/>
        <end position="38"/>
    </location>
</feature>
<feature type="strand" evidence="3">
    <location>
        <begin position="45"/>
        <end position="48"/>
    </location>
</feature>
<feature type="turn" evidence="3">
    <location>
        <begin position="49"/>
        <end position="52"/>
    </location>
</feature>
<feature type="strand" evidence="3">
    <location>
        <begin position="53"/>
        <end position="56"/>
    </location>
</feature>
<feature type="turn" evidence="3">
    <location>
        <begin position="57"/>
        <end position="59"/>
    </location>
</feature>
<feature type="helix" evidence="3">
    <location>
        <begin position="65"/>
        <end position="73"/>
    </location>
</feature>
<feature type="helix" evidence="3">
    <location>
        <begin position="77"/>
        <end position="88"/>
    </location>
</feature>
<feature type="helix" evidence="3">
    <location>
        <begin position="99"/>
        <end position="120"/>
    </location>
</feature>
<feature type="helix" evidence="3">
    <location>
        <begin position="122"/>
        <end position="130"/>
    </location>
</feature>
<feature type="helix" evidence="3">
    <location>
        <begin position="135"/>
        <end position="140"/>
    </location>
</feature>
<feature type="helix" evidence="3">
    <location>
        <begin position="149"/>
        <end position="159"/>
    </location>
</feature>
<feature type="helix" evidence="3">
    <location>
        <begin position="162"/>
        <end position="166"/>
    </location>
</feature>
<feature type="turn" evidence="3">
    <location>
        <begin position="167"/>
        <end position="169"/>
    </location>
</feature>
<feature type="turn" evidence="3">
    <location>
        <begin position="182"/>
        <end position="185"/>
    </location>
</feature>
<feature type="strand" evidence="3">
    <location>
        <begin position="186"/>
        <end position="192"/>
    </location>
</feature>
<feature type="strand" evidence="3">
    <location>
        <begin position="198"/>
        <end position="205"/>
    </location>
</feature>
<feature type="strand" evidence="3">
    <location>
        <begin position="213"/>
        <end position="216"/>
    </location>
</feature>
<feature type="helix" evidence="3">
    <location>
        <begin position="225"/>
        <end position="227"/>
    </location>
</feature>
<feature type="helix" evidence="3">
    <location>
        <begin position="232"/>
        <end position="242"/>
    </location>
</feature>
<feature type="strand" evidence="3">
    <location>
        <begin position="245"/>
        <end position="247"/>
    </location>
</feature>
<feature type="helix" evidence="3">
    <location>
        <begin position="251"/>
        <end position="259"/>
    </location>
</feature>
<feature type="strand" evidence="3">
    <location>
        <begin position="264"/>
        <end position="272"/>
    </location>
</feature>
<feature type="helix" evidence="3">
    <location>
        <begin position="275"/>
        <end position="282"/>
    </location>
</feature>
<feature type="strand" evidence="3">
    <location>
        <begin position="286"/>
        <end position="291"/>
    </location>
</feature>
<feature type="helix" evidence="3">
    <location>
        <begin position="296"/>
        <end position="311"/>
    </location>
</feature>
<feature type="strand" evidence="3">
    <location>
        <begin position="315"/>
        <end position="319"/>
    </location>
</feature>
<feature type="helix" evidence="3">
    <location>
        <begin position="327"/>
        <end position="334"/>
    </location>
</feature>
<feature type="helix" evidence="3">
    <location>
        <begin position="336"/>
        <end position="345"/>
    </location>
</feature>
<feature type="helix" evidence="3">
    <location>
        <begin position="349"/>
        <end position="356"/>
    </location>
</feature>
<feature type="helix" evidence="3">
    <location>
        <begin position="357"/>
        <end position="359"/>
    </location>
</feature>
<feature type="helix" evidence="3">
    <location>
        <begin position="361"/>
        <end position="372"/>
    </location>
</feature>
<feature type="helix" evidence="3">
    <location>
        <begin position="378"/>
        <end position="392"/>
    </location>
</feature>
<feature type="helix" evidence="3">
    <location>
        <begin position="396"/>
        <end position="399"/>
    </location>
</feature>
<keyword id="KW-0002">3D-structure</keyword>
<keyword id="KW-0235">DNA replication</keyword>
<keyword id="KW-0238">DNA-binding</keyword>
<keyword id="KW-0240">DNA-directed RNA polymerase</keyword>
<keyword id="KW-0460">Magnesium</keyword>
<keyword id="KW-0479">Metal-binding</keyword>
<keyword id="KW-0548">Nucleotidyltransferase</keyword>
<keyword id="KW-0639">Primosome</keyword>
<keyword id="KW-1185">Reference proteome</keyword>
<keyword id="KW-0804">Transcription</keyword>
<keyword id="KW-0808">Transferase</keyword>
<keyword id="KW-0862">Zinc</keyword>
<keyword id="KW-0863">Zinc-finger</keyword>
<organism>
    <name type="scientific">Aquifex aeolicus (strain VF5)</name>
    <dbReference type="NCBI Taxonomy" id="224324"/>
    <lineage>
        <taxon>Bacteria</taxon>
        <taxon>Pseudomonadati</taxon>
        <taxon>Aquificota</taxon>
        <taxon>Aquificia</taxon>
        <taxon>Aquificales</taxon>
        <taxon>Aquificaceae</taxon>
        <taxon>Aquifex</taxon>
    </lineage>
</organism>
<name>DNAG_AQUAE</name>
<proteinExistence type="evidence at protein level"/>